<name>VP22_VZVO</name>
<comment type="function">
    <text evidence="1 5">Tegument protein that plays different roles during the time course of infection (By similarity). Participates in both the accumulation of viral mRNAs and viral protein translation at late time of infection (By similarity). Modulates the RNase activity of the virion host shutoff protein ORF17 probably to ensure necessary levels of key cellular mRNAs and proteins (By similarity). Plays a role in microtubule reorganization that occurs after viral infection by stabilizing microtubule network (By similarity). Plays a role in the inhibition of host innate immune system by targeting the CGAS enzymatic activity which is the principal cytosolic DNA sensor that detects invading viral DNA (PubMed:34015248). Acts by mediating disruption of liquid-like droplets in which CGAS is activated, thereby preventing CGAS activity (PubMed:34015248).</text>
</comment>
<comment type="subunit">
    <text evidence="1 4 5">Interacts with gE (via C-terminus); this interaction is necessary for the recruitment of VP22/ORF9 to the Golgi and its packaging into virions (PubMed:18400847). Interacts with gM (via C-terminus) (By similarity). Interacts with VP16/ORF10; this interaction allows the formation of a tripartite complex composed of VP16/ORF10, VP22/ORF9 and VHS/ORF17 (By similarity). Interacts with the capsid-binding protein ORF44 (By similarity). Interacts with host CGAS (PubMed:34015248).</text>
</comment>
<comment type="subcellular location">
    <subcellularLocation>
        <location evidence="4">Virion tegument</location>
    </subcellularLocation>
    <subcellularLocation>
        <location evidence="1">Host cytoplasm</location>
    </subcellularLocation>
    <subcellularLocation>
        <location evidence="1">Host nucleus</location>
    </subcellularLocation>
    <subcellularLocation>
        <location evidence="1">Host Golgi apparatus</location>
    </subcellularLocation>
    <text evidence="1">One of the most abundant tegument protein (about 2000 copies per virion). Localizes in the cytoplasm at 8 hours postinfection and in the nucleus at 16 hours postinfection. During virion morphogenesis, this protein probably accumulates at the trans-Golgi where secondary envelopment occurs.</text>
</comment>
<comment type="PTM">
    <text evidence="1">Highly phosphorylated in the host cell. Packaging is selective for underphosphorylated forms.</text>
</comment>
<comment type="similarity">
    <text evidence="7">Belongs to the alphaherpesvirinae VP22 tegument protein family.</text>
</comment>
<keyword id="KW-1035">Host cytoplasm</keyword>
<keyword id="KW-1040">Host Golgi apparatus</keyword>
<keyword id="KW-1048">Host nucleus</keyword>
<keyword id="KW-0945">Host-virus interaction</keyword>
<keyword id="KW-1090">Inhibition of host innate immune response by virus</keyword>
<keyword id="KW-0597">Phosphoprotein</keyword>
<keyword id="KW-0899">Viral immunoevasion</keyword>
<keyword id="KW-0946">Virion</keyword>
<keyword id="KW-0920">Virion tegument</keyword>
<evidence type="ECO:0000250" key="1">
    <source>
        <dbReference type="UniProtKB" id="P10233"/>
    </source>
</evidence>
<evidence type="ECO:0000250" key="2">
    <source>
        <dbReference type="UniProtKB" id="P30022"/>
    </source>
</evidence>
<evidence type="ECO:0000256" key="3">
    <source>
        <dbReference type="SAM" id="MobiDB-lite"/>
    </source>
</evidence>
<evidence type="ECO:0000269" key="4">
    <source>
    </source>
</evidence>
<evidence type="ECO:0000269" key="5">
    <source>
    </source>
</evidence>
<evidence type="ECO:0000303" key="6">
    <source>
    </source>
</evidence>
<evidence type="ECO:0000305" key="7"/>
<sequence>MASSDGDRLCRSNAVRRKTTPSYSGQYRTARRSVVVGPPDDSDDSLGYITTVGADSPSPVYADLYFEHKNTTPRVHQPNDSSGSEDDFEDIDEVVAAFREARLRHELVEDAVYENPLSVEKPSRSFTKNAAVKPKLEDSPKRAPPGAGAIASGRPISFSTAPKTATSSWCGPTPSYNKRVFCEAVRRVAAMQAQKAAEAAWNSNPPRNNAELDRLLTGAVIRITVHEGLNLIQAANEADLGEGASVSKRGHNRKTGDLQGGMGNEPMYAQVRKPKSRTDTQTTGRITNRSRARSASRTDARK</sequence>
<proteinExistence type="evidence at protein level"/>
<reference key="1">
    <citation type="journal article" date="2002" name="J. Virol.">
        <title>Comparison of the complete DNA sequences of the Oka varicella vaccine and its parental virus.</title>
        <authorList>
            <person name="Gomi Y."/>
            <person name="Sunamachi H."/>
            <person name="Mori Y."/>
            <person name="Nagaike K."/>
            <person name="Takahashi M."/>
            <person name="Yamanishi K."/>
        </authorList>
    </citation>
    <scope>NUCLEOTIDE SEQUENCE [LARGE SCALE GENOMIC DNA]</scope>
    <source>
        <strain>Isolate Human/Japan/P-Oka/1970</strain>
        <strain>Oka varicella vaccine Biken (V-Oka-Biken)</strain>
    </source>
</reference>
<reference key="2">
    <citation type="journal article" date="2008" name="J. Virol.">
        <title>Complete DNA sequences of two oka strain varicella-zoster virus genomes.</title>
        <authorList>
            <person name="Tillieux S.L."/>
            <person name="Halsey W.S."/>
            <person name="Thomas E.S."/>
            <person name="Voycik J.J."/>
            <person name="Sathe G.M."/>
            <person name="Vassilev V."/>
        </authorList>
    </citation>
    <scope>NUCLEOTIDE SEQUENCE [LARGE SCALE GENOMIC DNA]</scope>
    <source>
        <strain>Oka varicella vaccine VarilRix (V-Oka-GSK)</strain>
        <strain>Oka varicella vaccine Varivax (V-Oka-Merck)</strain>
    </source>
</reference>
<reference key="3">
    <citation type="journal article" date="2008" name="J. Virol.">
        <title>Functions of the ORF9-to-ORF12 gene cluster in varicella-zoster virus replication and in the pathogenesis of skin infection.</title>
        <authorList>
            <person name="Che X."/>
            <person name="Reichelt M."/>
            <person name="Sommer M.H."/>
            <person name="Rajamani J."/>
            <person name="Zerboni L."/>
            <person name="Arvin A.M."/>
        </authorList>
    </citation>
    <scope>SUBCELLULAR LOCATION</scope>
    <scope>INTERACTION WITH GE</scope>
    <source>
        <strain>Isolate Human/Japan/P-Oka/1970</strain>
    </source>
</reference>
<reference key="4">
    <citation type="journal article" date="2021" name="Mol. Cell">
        <title>Viral tegument proteins restrict cGAS-DNA phase separation to mediate immune evasion.</title>
        <authorList>
            <person name="Xu G."/>
            <person name="Liu C."/>
            <person name="Zhou S."/>
            <person name="Li Q."/>
            <person name="Feng Y."/>
            <person name="Sun P."/>
            <person name="Feng H."/>
            <person name="Gao Y."/>
            <person name="Zhu J."/>
            <person name="Luo X."/>
            <person name="Zhan Q."/>
            <person name="Liu S."/>
            <person name="Zhu S."/>
            <person name="Deng H."/>
            <person name="Li D."/>
            <person name="Gao P."/>
        </authorList>
    </citation>
    <scope>FUNCTION</scope>
    <scope>INTERACTION WITH HOST CGAS</scope>
</reference>
<organism>
    <name type="scientific">Varicella-zoster virus (strain Oka vaccine)</name>
    <name type="common">HHV-3</name>
    <name type="synonym">Human herpesvirus 3</name>
    <dbReference type="NCBI Taxonomy" id="341980"/>
    <lineage>
        <taxon>Viruses</taxon>
        <taxon>Duplodnaviria</taxon>
        <taxon>Heunggongvirae</taxon>
        <taxon>Peploviricota</taxon>
        <taxon>Herviviricetes</taxon>
        <taxon>Herpesvirales</taxon>
        <taxon>Orthoherpesviridae</taxon>
        <taxon>Alphaherpesvirinae</taxon>
        <taxon>Varicellovirus</taxon>
        <taxon>Varicellovirus humanalpha3</taxon>
        <taxon>Human herpesvirus 3</taxon>
    </lineage>
</organism>
<accession>Q4JQW6</accession>
<protein>
    <recommendedName>
        <fullName>Tegument protein VP22</fullName>
    </recommendedName>
    <alternativeName>
        <fullName evidence="6">Tegument protein 9</fullName>
    </alternativeName>
</protein>
<dbReference type="EMBL" id="AB097932">
    <property type="status" value="NOT_ANNOTATED_CDS"/>
    <property type="molecule type" value="Genomic_DNA"/>
</dbReference>
<dbReference type="EMBL" id="AB097933">
    <property type="status" value="NOT_ANNOTATED_CDS"/>
    <property type="molecule type" value="Genomic_DNA"/>
</dbReference>
<dbReference type="EMBL" id="DQ008354">
    <property type="protein sequence ID" value="AAY57627.1"/>
    <property type="molecule type" value="Genomic_DNA"/>
</dbReference>
<dbReference type="EMBL" id="DQ008355">
    <property type="protein sequence ID" value="AAY57698.1"/>
    <property type="molecule type" value="Genomic_DNA"/>
</dbReference>
<dbReference type="SMR" id="Q4JQW6"/>
<dbReference type="IntAct" id="Q4JQW6">
    <property type="interactions" value="16"/>
</dbReference>
<dbReference type="MINT" id="Q4JQW6"/>
<dbReference type="Proteomes" id="UP000002603">
    <property type="component" value="Genome"/>
</dbReference>
<dbReference type="Proteomes" id="UP000008504">
    <property type="component" value="Genome"/>
</dbReference>
<dbReference type="Proteomes" id="UP000008505">
    <property type="component" value="Genome"/>
</dbReference>
<dbReference type="Proteomes" id="UP000008506">
    <property type="component" value="Genome"/>
</dbReference>
<dbReference type="GO" id="GO:0044177">
    <property type="term" value="C:host cell Golgi apparatus"/>
    <property type="evidence" value="ECO:0007669"/>
    <property type="project" value="UniProtKB-SubCell"/>
</dbReference>
<dbReference type="GO" id="GO:0042025">
    <property type="term" value="C:host cell nucleus"/>
    <property type="evidence" value="ECO:0007669"/>
    <property type="project" value="UniProtKB-SubCell"/>
</dbReference>
<dbReference type="GO" id="GO:0019033">
    <property type="term" value="C:viral tegument"/>
    <property type="evidence" value="ECO:0007669"/>
    <property type="project" value="UniProtKB-SubCell"/>
</dbReference>
<dbReference type="GO" id="GO:0052170">
    <property type="term" value="P:symbiont-mediated suppression of host innate immune response"/>
    <property type="evidence" value="ECO:0000314"/>
    <property type="project" value="UniProtKB"/>
</dbReference>
<dbReference type="InterPro" id="IPR006908">
    <property type="entry name" value="Herpes_UL49"/>
</dbReference>
<dbReference type="Pfam" id="PF04823">
    <property type="entry name" value="Herpes_UL49_2"/>
    <property type="match status" value="1"/>
</dbReference>
<gene>
    <name evidence="6" type="ORF">ORF9</name>
</gene>
<feature type="chain" id="PRO_0000385496" description="Tegument protein VP22">
    <location>
        <begin position="1"/>
        <end position="302"/>
    </location>
</feature>
<feature type="region of interest" description="Disordered" evidence="3">
    <location>
        <begin position="1"/>
        <end position="42"/>
    </location>
</feature>
<feature type="region of interest" description="Disordered" evidence="3">
    <location>
        <begin position="125"/>
        <end position="167"/>
    </location>
</feature>
<feature type="region of interest" description="Interaction with gE" evidence="1">
    <location>
        <begin position="154"/>
        <end position="244"/>
    </location>
</feature>
<feature type="region of interest" description="Disordered" evidence="3">
    <location>
        <begin position="243"/>
        <end position="302"/>
    </location>
</feature>
<feature type="short sequence motif" description="Nuclear export signal" evidence="2">
    <location>
        <begin position="212"/>
        <end position="224"/>
    </location>
</feature>
<feature type="compositionally biased region" description="Basic and acidic residues" evidence="3">
    <location>
        <begin position="1"/>
        <end position="10"/>
    </location>
</feature>
<feature type="compositionally biased region" description="Polar residues" evidence="3">
    <location>
        <begin position="157"/>
        <end position="167"/>
    </location>
</feature>
<organismHost>
    <name type="scientific">Homo sapiens</name>
    <name type="common">Human</name>
    <dbReference type="NCBI Taxonomy" id="9606"/>
</organismHost>